<protein>
    <recommendedName>
        <fullName evidence="1">Sirohydrochlorin cobaltochelatase</fullName>
        <ecNumber evidence="1">4.99.1.3</ecNumber>
    </recommendedName>
    <alternativeName>
        <fullName evidence="1">CbiXS</fullName>
    </alternativeName>
    <alternativeName>
        <fullName evidence="1">Sirohydrochlorin nickelchelatase</fullName>
        <ecNumber evidence="1">4.99.1.11</ecNumber>
    </alternativeName>
</protein>
<feature type="chain" id="PRO_1000046841" description="Sirohydrochlorin cobaltochelatase">
    <location>
        <begin position="1"/>
        <end position="131"/>
    </location>
</feature>
<feature type="active site" description="Proton acceptor" evidence="1">
    <location>
        <position position="12"/>
    </location>
</feature>
<feature type="binding site" evidence="1">
    <location>
        <position position="12"/>
    </location>
    <ligand>
        <name>Co(2+)</name>
        <dbReference type="ChEBI" id="CHEBI:48828"/>
    </ligand>
</feature>
<feature type="binding site" evidence="1">
    <location>
        <position position="12"/>
    </location>
    <ligand>
        <name>Ni(2+)</name>
        <dbReference type="ChEBI" id="CHEBI:49786"/>
    </ligand>
</feature>
<feature type="binding site" evidence="1">
    <location>
        <begin position="73"/>
        <end position="78"/>
    </location>
    <ligand>
        <name>substrate</name>
    </ligand>
</feature>
<feature type="binding site" evidence="1">
    <location>
        <position position="78"/>
    </location>
    <ligand>
        <name>Co(2+)</name>
        <dbReference type="ChEBI" id="CHEBI:48828"/>
    </ligand>
</feature>
<feature type="binding site" evidence="1">
    <location>
        <position position="78"/>
    </location>
    <ligand>
        <name>Ni(2+)</name>
        <dbReference type="ChEBI" id="CHEBI:49786"/>
    </ligand>
</feature>
<organism>
    <name type="scientific">Methanococcoides burtonii (strain DSM 6242 / NBRC 107633 / OCM 468 / ACE-M)</name>
    <dbReference type="NCBI Taxonomy" id="259564"/>
    <lineage>
        <taxon>Archaea</taxon>
        <taxon>Methanobacteriati</taxon>
        <taxon>Methanobacteriota</taxon>
        <taxon>Stenosarchaea group</taxon>
        <taxon>Methanomicrobia</taxon>
        <taxon>Methanosarcinales</taxon>
        <taxon>Methanosarcinaceae</taxon>
        <taxon>Methanococcoides</taxon>
    </lineage>
</organism>
<gene>
    <name evidence="1" type="primary">cbiX</name>
    <name evidence="1" type="synonym">cfbA</name>
    <name type="ordered locus">Mbur_1035</name>
</gene>
<comment type="function">
    <text evidence="1">Catalyzes the insertion of Co(2+) into sirohydrochlorin as part of the anaerobic pathway to cobalamin biosynthesis. Involved in the biosynthesis of the unique nickel-containing tetrapyrrole coenzyme F430, the prosthetic group of methyl-coenzyme M reductase (MCR), which plays a key role in methanogenesis and anaerobic methane oxidation. Catalyzes the insertion of Ni(2+) into sirohydrochlorin to yield Ni-sirohydrochlorin.</text>
</comment>
<comment type="catalytic activity">
    <reaction evidence="1">
        <text>Co-sirohydrochlorin + 2 H(+) = sirohydrochlorin + Co(2+)</text>
        <dbReference type="Rhea" id="RHEA:15893"/>
        <dbReference type="ChEBI" id="CHEBI:15378"/>
        <dbReference type="ChEBI" id="CHEBI:48828"/>
        <dbReference type="ChEBI" id="CHEBI:58351"/>
        <dbReference type="ChEBI" id="CHEBI:60049"/>
        <dbReference type="EC" id="4.99.1.3"/>
    </reaction>
</comment>
<comment type="catalytic activity">
    <reaction evidence="1">
        <text>Ni-sirohydrochlorin + 2 H(+) = sirohydrochlorin + Ni(2+)</text>
        <dbReference type="Rhea" id="RHEA:52796"/>
        <dbReference type="ChEBI" id="CHEBI:15378"/>
        <dbReference type="ChEBI" id="CHEBI:49786"/>
        <dbReference type="ChEBI" id="CHEBI:58351"/>
        <dbReference type="ChEBI" id="CHEBI:136841"/>
        <dbReference type="EC" id="4.99.1.11"/>
    </reaction>
</comment>
<comment type="pathway">
    <text evidence="1">Cofactor biosynthesis; adenosylcobalamin biosynthesis; cob(II)yrinate a,c-diamide from sirohydrochlorin (anaerobic route): step 1/10.</text>
</comment>
<comment type="subunit">
    <text evidence="1">Homotetramer; dimer of dimers.</text>
</comment>
<comment type="similarity">
    <text evidence="1">Belongs to the CbiX family. CbiXS subfamily.</text>
</comment>
<keyword id="KW-0169">Cobalamin biosynthesis</keyword>
<keyword id="KW-0170">Cobalt</keyword>
<keyword id="KW-0456">Lyase</keyword>
<keyword id="KW-0479">Metal-binding</keyword>
<keyword id="KW-0484">Methanogenesis</keyword>
<keyword id="KW-0533">Nickel</keyword>
<proteinExistence type="inferred from homology"/>
<evidence type="ECO:0000255" key="1">
    <source>
        <dbReference type="HAMAP-Rule" id="MF_00785"/>
    </source>
</evidence>
<dbReference type="EC" id="4.99.1.3" evidence="1"/>
<dbReference type="EC" id="4.99.1.11" evidence="1"/>
<dbReference type="EMBL" id="CP000300">
    <property type="protein sequence ID" value="ABE51970.1"/>
    <property type="molecule type" value="Genomic_DNA"/>
</dbReference>
<dbReference type="RefSeq" id="WP_011499119.1">
    <property type="nucleotide sequence ID" value="NC_007955.1"/>
</dbReference>
<dbReference type="SMR" id="Q12X56"/>
<dbReference type="STRING" id="259564.Mbur_1035"/>
<dbReference type="GeneID" id="3998775"/>
<dbReference type="KEGG" id="mbu:Mbur_1035"/>
<dbReference type="HOGENOM" id="CLU_065901_2_1_2"/>
<dbReference type="OrthoDB" id="11653at2157"/>
<dbReference type="UniPathway" id="UPA00148">
    <property type="reaction ID" value="UER00223"/>
</dbReference>
<dbReference type="Proteomes" id="UP000001979">
    <property type="component" value="Chromosome"/>
</dbReference>
<dbReference type="GO" id="GO:0050897">
    <property type="term" value="F:cobalt ion binding"/>
    <property type="evidence" value="ECO:0007669"/>
    <property type="project" value="UniProtKB-UniRule"/>
</dbReference>
<dbReference type="GO" id="GO:0016151">
    <property type="term" value="F:nickel cation binding"/>
    <property type="evidence" value="ECO:0007669"/>
    <property type="project" value="UniProtKB-UniRule"/>
</dbReference>
<dbReference type="GO" id="GO:0016852">
    <property type="term" value="F:sirohydrochlorin cobaltochelatase activity"/>
    <property type="evidence" value="ECO:0007669"/>
    <property type="project" value="UniProtKB-UniRule"/>
</dbReference>
<dbReference type="GO" id="GO:0019251">
    <property type="term" value="P:anaerobic cobalamin biosynthetic process"/>
    <property type="evidence" value="ECO:0007669"/>
    <property type="project" value="UniProtKB-UniRule"/>
</dbReference>
<dbReference type="GO" id="GO:0015948">
    <property type="term" value="P:methanogenesis"/>
    <property type="evidence" value="ECO:0007669"/>
    <property type="project" value="UniProtKB-KW"/>
</dbReference>
<dbReference type="CDD" id="cd03416">
    <property type="entry name" value="CbiX_SirB_N"/>
    <property type="match status" value="1"/>
</dbReference>
<dbReference type="Gene3D" id="3.40.50.1400">
    <property type="match status" value="1"/>
</dbReference>
<dbReference type="HAMAP" id="MF_00785">
    <property type="entry name" value="CbiX"/>
    <property type="match status" value="1"/>
</dbReference>
<dbReference type="InterPro" id="IPR002762">
    <property type="entry name" value="CbiX-like"/>
</dbReference>
<dbReference type="InterPro" id="IPR023652">
    <property type="entry name" value="SiroHydchlorin_Cochelatase"/>
</dbReference>
<dbReference type="InterPro" id="IPR050963">
    <property type="entry name" value="Sirohydro_Cobaltochel/CbiX"/>
</dbReference>
<dbReference type="NCBIfam" id="NF033198">
    <property type="entry name" value="F430_CfbA"/>
    <property type="match status" value="1"/>
</dbReference>
<dbReference type="NCBIfam" id="NF002090">
    <property type="entry name" value="PRK00923.1"/>
    <property type="match status" value="1"/>
</dbReference>
<dbReference type="PANTHER" id="PTHR33542">
    <property type="entry name" value="SIROHYDROCHLORIN FERROCHELATASE, CHLOROPLASTIC"/>
    <property type="match status" value="1"/>
</dbReference>
<dbReference type="PANTHER" id="PTHR33542:SF3">
    <property type="entry name" value="SIROHYDROCHLORIN FERROCHELATASE, CHLOROPLASTIC"/>
    <property type="match status" value="1"/>
</dbReference>
<dbReference type="Pfam" id="PF01903">
    <property type="entry name" value="CbiX"/>
    <property type="match status" value="1"/>
</dbReference>
<dbReference type="SUPFAM" id="SSF53800">
    <property type="entry name" value="Chelatase"/>
    <property type="match status" value="1"/>
</dbReference>
<name>CFBA_METBU</name>
<sequence>MSEKIGILAIGHGSRLPYNKEVVSEIAATIAKKHPDYVIKAGFMENTLPTVMEALADFDGTGVTKIIAVPVFLASGVHITEDIPEILKLDPETNEGKITVDGNEIPVTFGKPLGHHELLADLVFERAMEVM</sequence>
<accession>Q12X56</accession>
<reference key="1">
    <citation type="journal article" date="2009" name="ISME J.">
        <title>The genome sequence of the psychrophilic archaeon, Methanococcoides burtonii: the role of genome evolution in cold adaptation.</title>
        <authorList>
            <person name="Allen M.A."/>
            <person name="Lauro F.M."/>
            <person name="Williams T.J."/>
            <person name="Burg D."/>
            <person name="Siddiqui K.S."/>
            <person name="De Francisci D."/>
            <person name="Chong K.W."/>
            <person name="Pilak O."/>
            <person name="Chew H.H."/>
            <person name="De Maere M.Z."/>
            <person name="Ting L."/>
            <person name="Katrib M."/>
            <person name="Ng C."/>
            <person name="Sowers K.R."/>
            <person name="Galperin M.Y."/>
            <person name="Anderson I.J."/>
            <person name="Ivanova N."/>
            <person name="Dalin E."/>
            <person name="Martinez M."/>
            <person name="Lapidus A."/>
            <person name="Hauser L."/>
            <person name="Land M."/>
            <person name="Thomas T."/>
            <person name="Cavicchioli R."/>
        </authorList>
    </citation>
    <scope>NUCLEOTIDE SEQUENCE [LARGE SCALE GENOMIC DNA]</scope>
    <source>
        <strain>DSM 6242 / NBRC 107633 / OCM 468 / ACE-M</strain>
    </source>
</reference>